<accession>P16320</accession>
<accession>P15296</accession>
<accession>P15297</accession>
<name>NOF_DROME</name>
<proteinExistence type="predicted"/>
<feature type="chain" id="PRO_0000096925" description="120.7 kDa protein in NOF-FB transposable element">
    <location>
        <begin position="1"/>
        <end position="1056"/>
    </location>
</feature>
<feature type="region of interest" description="Disordered" evidence="1">
    <location>
        <begin position="716"/>
        <end position="749"/>
    </location>
</feature>
<feature type="compositionally biased region" description="Acidic residues" evidence="1">
    <location>
        <begin position="724"/>
        <end position="736"/>
    </location>
</feature>
<feature type="compositionally biased region" description="Basic and acidic residues" evidence="1">
    <location>
        <begin position="737"/>
        <end position="749"/>
    </location>
</feature>
<feature type="sequence conflict" description="In Ref. 1; CAA33496." evidence="2" ref="1">
    <original>F</original>
    <variation>L</variation>
    <location>
        <position position="610"/>
    </location>
</feature>
<feature type="sequence conflict" description="In Ref. 1; CAA33496." evidence="2" ref="1">
    <original>KNTD</original>
    <variation>NFWT</variation>
    <location>
        <begin position="630"/>
        <end position="633"/>
    </location>
</feature>
<organism>
    <name type="scientific">Drosophila melanogaster</name>
    <name type="common">Fruit fly</name>
    <dbReference type="NCBI Taxonomy" id="7227"/>
    <lineage>
        <taxon>Eukaryota</taxon>
        <taxon>Metazoa</taxon>
        <taxon>Ecdysozoa</taxon>
        <taxon>Arthropoda</taxon>
        <taxon>Hexapoda</taxon>
        <taxon>Insecta</taxon>
        <taxon>Pterygota</taxon>
        <taxon>Neoptera</taxon>
        <taxon>Endopterygota</taxon>
        <taxon>Diptera</taxon>
        <taxon>Brachycera</taxon>
        <taxon>Muscomorpha</taxon>
        <taxon>Ephydroidea</taxon>
        <taxon>Drosophilidae</taxon>
        <taxon>Drosophila</taxon>
        <taxon>Sophophora</taxon>
    </lineage>
</organism>
<dbReference type="EMBL" id="X15469">
    <property type="protein sequence ID" value="CAA33496.1"/>
    <property type="molecule type" value="Genomic_DNA"/>
</dbReference>
<dbReference type="EMBL" id="X15469">
    <property type="protein sequence ID" value="CAA33497.1"/>
    <property type="status" value="ALT_FRAME"/>
    <property type="molecule type" value="Genomic_DNA"/>
</dbReference>
<dbReference type="EMBL" id="X51937">
    <property type="protein sequence ID" value="CAA36201.1"/>
    <property type="molecule type" value="Genomic_DNA"/>
</dbReference>
<dbReference type="PIR" id="S07824">
    <property type="entry name" value="S07824"/>
</dbReference>
<dbReference type="PIR" id="S07825">
    <property type="entry name" value="S07825"/>
</dbReference>
<dbReference type="PIR" id="S14382">
    <property type="entry name" value="S14382"/>
</dbReference>
<dbReference type="FlyBase" id="FBgn0044029">
    <property type="gene designation" value="NOF\ORF"/>
</dbReference>
<dbReference type="PRO" id="PR:P16320"/>
<dbReference type="GO" id="GO:0005634">
    <property type="term" value="C:nucleus"/>
    <property type="evidence" value="ECO:0007669"/>
    <property type="project" value="UniProtKB-SubCell"/>
</dbReference>
<reference key="1">
    <citation type="journal article" date="1989" name="EMBO J.">
        <title>Complete foldback transposable elements encode a novel protein found in Drosophila melanogaster.</title>
        <authorList>
            <person name="Templeton N.S."/>
            <person name="Potter S.S."/>
        </authorList>
    </citation>
    <scope>NUCLEOTIDE SEQUENCE [GENOMIC DNA]</scope>
    <source>
        <strain>Oregon-R</strain>
    </source>
</reference>
<reference key="2">
    <citation type="journal article" date="1990" name="Genetics">
        <title>Characterization of the FB-NOF transposable element of Drosophila melanogaster.</title>
        <authorList>
            <person name="Harden N."/>
            <person name="Ashburner M."/>
        </authorList>
    </citation>
    <scope>NUCLEOTIDE SEQUENCE [GENOMIC DNA] OF 73-1056</scope>
    <source>
        <strain>TE146(Z)</strain>
    </source>
</reference>
<reference key="3">
    <citation type="thesis" date="1989" institute="University of Cambridge" country="United Kingdom">
        <authorList>
            <person name="Harden N."/>
        </authorList>
    </citation>
    <scope>NUCLEOTIDE SEQUENCE [GENOMIC DNA] OF 73-1056</scope>
</reference>
<keyword id="KW-0539">Nucleus</keyword>
<keyword id="KW-0814">Transposable element</keyword>
<comment type="function">
    <text>May be involved in the transposition of NOF-FB and other FB elements.</text>
</comment>
<comment type="subcellular location">
    <subcellularLocation>
        <location evidence="2">Nucleus</location>
    </subcellularLocation>
</comment>
<comment type="sequence caution" evidence="2">
    <conflict type="frameshift">
        <sequence resource="EMBL-CDS" id="CAA33497"/>
    </conflict>
</comment>
<gene>
    <name type="primary">NOF</name>
    <name type="synonym">ORF</name>
</gene>
<evidence type="ECO:0000256" key="1">
    <source>
        <dbReference type="SAM" id="MobiDB-lite"/>
    </source>
</evidence>
<evidence type="ECO:0000305" key="2"/>
<protein>
    <recommendedName>
        <fullName>120.7 kDa protein in NOF-FB transposable element</fullName>
    </recommendedName>
</protein>
<sequence length="1056" mass="120731">MPAKPQVDGHTLVDAFCCANIFTETGALKPRSDKVWMDISNQLKGAISAKTLNFYARINRNNMITVVKERCGIQQLDTSANLTLNSTFPDDDPEFQITEASKNGPLPILYFNLELDLELWRSIAPKKDQKTEKLQPNWTDTMAKLIYKKVPLPCAFNFRKAKLSDKVDNIWLRIEGYCNDCSSILKGHCLVKPDEQCGIMISVSVPDTRGIPHNKKRRCTGSRRLEIGNELILKKAALWRKEATDNMNDDDPEPSYIPNLPTLRKLREEATNRHLGITKDRDPVSSLYLKKYEGELAGCILDIGLDEFFCIYCTGTQVKTYASRIKTIRKISIDATGSVVLPIQKPNGDSSYVFLYQIVMEGDDSIFPVFQMLSAKHDTASIQFWLSRFISKSGHFPLEVVSDFSLALLNGISLSFNECRIATYIKKCFHSLLMEERTDLPPCYIRLDIAHLIKMICRKNVFKSKLPNLKDFYTRCIGLATTCETKDSFAELIKSVLIVALSQSSGEDEKGDILSSYRNEKYLLARIATFTAPDHKETIEDNCIPEDQEEIDEDVTDFISNIKIAAEEEALNCNSVNCRPNPYFLPELMPPLIKLCKYFVLWTNVMKEKFCSKYDVGSSALVEAYFKDLKNTDMSIFHRPVRADKFVVQHIRCIEAVCKLERAAMKRKTVKTPSFIKENAPKKMCSKETKGFLEEILEESEVEYLLQEENWKVKNKTIKPTEGNDAEDNDTDDENKEMDLSEQPKEKPRGKYLKKCPNVELLYNRPHRRKQDEILHNGGSMGPVWIGKQLLQFKNTCPFDSLVEILSTAYIDNFYYKSLLDDFYTDNLTIELVKKYAVEGVSSSLYCDRGLVLKSFFDEKHQIIKCDANIGSFIEKALNGVPSASSHRTHIKNNHDCRNQKYIHHRLEVIDVEKVGHLDVQEVVIPFIDEFFARTDGECKICGGQQILERQPGPHVILDIEFAMDAFHQIHHNGLPGTTTLLQVPEEILIQEKKYILSGAIEYVPAMGGEIGHYIAYCRRVIGSWEVHNDMCRQWKKFSALNTKMTLHILIYTRKN</sequence>